<gene>
    <name evidence="1" type="primary">ruvC</name>
    <name type="ordered locus">BLA_1343</name>
</gene>
<name>RUVC_BIFA0</name>
<proteinExistence type="inferred from homology"/>
<organism>
    <name type="scientific">Bifidobacterium animalis subsp. lactis (strain AD011)</name>
    <dbReference type="NCBI Taxonomy" id="442563"/>
    <lineage>
        <taxon>Bacteria</taxon>
        <taxon>Bacillati</taxon>
        <taxon>Actinomycetota</taxon>
        <taxon>Actinomycetes</taxon>
        <taxon>Bifidobacteriales</taxon>
        <taxon>Bifidobacteriaceae</taxon>
        <taxon>Bifidobacterium</taxon>
    </lineage>
</organism>
<keyword id="KW-0963">Cytoplasm</keyword>
<keyword id="KW-0227">DNA damage</keyword>
<keyword id="KW-0233">DNA recombination</keyword>
<keyword id="KW-0234">DNA repair</keyword>
<keyword id="KW-0238">DNA-binding</keyword>
<keyword id="KW-0255">Endonuclease</keyword>
<keyword id="KW-0378">Hydrolase</keyword>
<keyword id="KW-0460">Magnesium</keyword>
<keyword id="KW-0479">Metal-binding</keyword>
<keyword id="KW-0540">Nuclease</keyword>
<keyword id="KW-1185">Reference proteome</keyword>
<reference key="1">
    <citation type="journal article" date="2009" name="J. Bacteriol.">
        <title>Genome sequence of the probiotic bacterium Bifidobacterium animalis subsp. lactis AD011.</title>
        <authorList>
            <person name="Kim J.F."/>
            <person name="Jeong H."/>
            <person name="Yu D.S."/>
            <person name="Choi S.-H."/>
            <person name="Hur C.-G."/>
            <person name="Park M.-S."/>
            <person name="Yoon S.H."/>
            <person name="Kim D.-W."/>
            <person name="Ji G.E."/>
            <person name="Park H.-S."/>
            <person name="Oh T.K."/>
        </authorList>
    </citation>
    <scope>NUCLEOTIDE SEQUENCE [LARGE SCALE GENOMIC DNA]</scope>
    <source>
        <strain>AD011</strain>
    </source>
</reference>
<comment type="function">
    <text evidence="1">The RuvA-RuvB-RuvC complex processes Holliday junction (HJ) DNA during genetic recombination and DNA repair. Endonuclease that resolves HJ intermediates. Cleaves cruciform DNA by making single-stranded nicks across the HJ at symmetrical positions within the homologous arms, yielding a 5'-phosphate and a 3'-hydroxyl group; requires a central core of homology in the junction. The consensus cleavage sequence is 5'-(A/T)TT(C/G)-3'. Cleavage occurs on the 3'-side of the TT dinucleotide at the point of strand exchange. HJ branch migration catalyzed by RuvA-RuvB allows RuvC to scan DNA until it finds its consensus sequence, where it cleaves and resolves the cruciform DNA.</text>
</comment>
<comment type="catalytic activity">
    <reaction evidence="1">
        <text>Endonucleolytic cleavage at a junction such as a reciprocal single-stranded crossover between two homologous DNA duplexes (Holliday junction).</text>
        <dbReference type="EC" id="3.1.21.10"/>
    </reaction>
</comment>
<comment type="cofactor">
    <cofactor evidence="1">
        <name>Mg(2+)</name>
        <dbReference type="ChEBI" id="CHEBI:18420"/>
    </cofactor>
    <text evidence="1">Binds 2 Mg(2+) ion per subunit.</text>
</comment>
<comment type="subunit">
    <text evidence="1">Homodimer which binds Holliday junction (HJ) DNA. The HJ becomes 2-fold symmetrical on binding to RuvC with unstacked arms; it has a different conformation from HJ DNA in complex with RuvA. In the full resolvosome a probable DNA-RuvA(4)-RuvB(12)-RuvC(2) complex forms which resolves the HJ.</text>
</comment>
<comment type="subcellular location">
    <subcellularLocation>
        <location evidence="1">Cytoplasm</location>
    </subcellularLocation>
</comment>
<comment type="similarity">
    <text evidence="1">Belongs to the RuvC family.</text>
</comment>
<protein>
    <recommendedName>
        <fullName evidence="1">Crossover junction endodeoxyribonuclease RuvC</fullName>
        <ecNumber evidence="1">3.1.21.10</ecNumber>
    </recommendedName>
    <alternativeName>
        <fullName evidence="1">Holliday junction nuclease RuvC</fullName>
    </alternativeName>
    <alternativeName>
        <fullName evidence="1">Holliday junction resolvase RuvC</fullName>
    </alternativeName>
</protein>
<feature type="chain" id="PRO_1000195236" description="Crossover junction endodeoxyribonuclease RuvC">
    <location>
        <begin position="1"/>
        <end position="193"/>
    </location>
</feature>
<feature type="region of interest" description="Disordered" evidence="2">
    <location>
        <begin position="174"/>
        <end position="193"/>
    </location>
</feature>
<feature type="compositionally biased region" description="Basic residues" evidence="2">
    <location>
        <begin position="183"/>
        <end position="193"/>
    </location>
</feature>
<feature type="active site" evidence="1">
    <location>
        <position position="7"/>
    </location>
</feature>
<feature type="active site" evidence="1">
    <location>
        <position position="68"/>
    </location>
</feature>
<feature type="active site" evidence="1">
    <location>
        <position position="141"/>
    </location>
</feature>
<feature type="binding site" evidence="1">
    <location>
        <position position="7"/>
    </location>
    <ligand>
        <name>Mg(2+)</name>
        <dbReference type="ChEBI" id="CHEBI:18420"/>
        <label>1</label>
    </ligand>
</feature>
<feature type="binding site" evidence="1">
    <location>
        <position position="68"/>
    </location>
    <ligand>
        <name>Mg(2+)</name>
        <dbReference type="ChEBI" id="CHEBI:18420"/>
        <label>2</label>
    </ligand>
</feature>
<feature type="binding site" evidence="1">
    <location>
        <position position="141"/>
    </location>
    <ligand>
        <name>Mg(2+)</name>
        <dbReference type="ChEBI" id="CHEBI:18420"/>
        <label>1</label>
    </ligand>
</feature>
<accession>B8DUE9</accession>
<dbReference type="EC" id="3.1.21.10" evidence="1"/>
<dbReference type="EMBL" id="CP001213">
    <property type="protein sequence ID" value="ACL29628.1"/>
    <property type="molecule type" value="Genomic_DNA"/>
</dbReference>
<dbReference type="RefSeq" id="WP_004217955.1">
    <property type="nucleotide sequence ID" value="NC_011835.1"/>
</dbReference>
<dbReference type="SMR" id="B8DUE9"/>
<dbReference type="STRING" id="442563.BLA_1343"/>
<dbReference type="GeneID" id="29695634"/>
<dbReference type="KEGG" id="bla:BLA_1343"/>
<dbReference type="HOGENOM" id="CLU_091257_0_2_11"/>
<dbReference type="Proteomes" id="UP000002456">
    <property type="component" value="Chromosome"/>
</dbReference>
<dbReference type="GO" id="GO:0005737">
    <property type="term" value="C:cytoplasm"/>
    <property type="evidence" value="ECO:0007669"/>
    <property type="project" value="UniProtKB-SubCell"/>
</dbReference>
<dbReference type="GO" id="GO:0048476">
    <property type="term" value="C:Holliday junction resolvase complex"/>
    <property type="evidence" value="ECO:0007669"/>
    <property type="project" value="UniProtKB-UniRule"/>
</dbReference>
<dbReference type="GO" id="GO:0008821">
    <property type="term" value="F:crossover junction DNA endonuclease activity"/>
    <property type="evidence" value="ECO:0007669"/>
    <property type="project" value="UniProtKB-UniRule"/>
</dbReference>
<dbReference type="GO" id="GO:0003677">
    <property type="term" value="F:DNA binding"/>
    <property type="evidence" value="ECO:0007669"/>
    <property type="project" value="UniProtKB-KW"/>
</dbReference>
<dbReference type="GO" id="GO:0000287">
    <property type="term" value="F:magnesium ion binding"/>
    <property type="evidence" value="ECO:0007669"/>
    <property type="project" value="UniProtKB-UniRule"/>
</dbReference>
<dbReference type="GO" id="GO:0006310">
    <property type="term" value="P:DNA recombination"/>
    <property type="evidence" value="ECO:0007669"/>
    <property type="project" value="UniProtKB-UniRule"/>
</dbReference>
<dbReference type="GO" id="GO:0006281">
    <property type="term" value="P:DNA repair"/>
    <property type="evidence" value="ECO:0007669"/>
    <property type="project" value="UniProtKB-UniRule"/>
</dbReference>
<dbReference type="FunFam" id="3.30.420.10:FF:000002">
    <property type="entry name" value="Crossover junction endodeoxyribonuclease RuvC"/>
    <property type="match status" value="1"/>
</dbReference>
<dbReference type="Gene3D" id="3.30.420.10">
    <property type="entry name" value="Ribonuclease H-like superfamily/Ribonuclease H"/>
    <property type="match status" value="1"/>
</dbReference>
<dbReference type="HAMAP" id="MF_00034">
    <property type="entry name" value="RuvC"/>
    <property type="match status" value="1"/>
</dbReference>
<dbReference type="InterPro" id="IPR012337">
    <property type="entry name" value="RNaseH-like_sf"/>
</dbReference>
<dbReference type="InterPro" id="IPR036397">
    <property type="entry name" value="RNaseH_sf"/>
</dbReference>
<dbReference type="InterPro" id="IPR020563">
    <property type="entry name" value="X-over_junc_endoDNase_Mg_BS"/>
</dbReference>
<dbReference type="InterPro" id="IPR002176">
    <property type="entry name" value="X-over_junc_endoDNase_RuvC"/>
</dbReference>
<dbReference type="NCBIfam" id="TIGR00228">
    <property type="entry name" value="ruvC"/>
    <property type="match status" value="1"/>
</dbReference>
<dbReference type="PANTHER" id="PTHR30194">
    <property type="entry name" value="CROSSOVER JUNCTION ENDODEOXYRIBONUCLEASE RUVC"/>
    <property type="match status" value="1"/>
</dbReference>
<dbReference type="PANTHER" id="PTHR30194:SF3">
    <property type="entry name" value="CROSSOVER JUNCTION ENDODEOXYRIBONUCLEASE RUVC"/>
    <property type="match status" value="1"/>
</dbReference>
<dbReference type="Pfam" id="PF02075">
    <property type="entry name" value="RuvC"/>
    <property type="match status" value="1"/>
</dbReference>
<dbReference type="PRINTS" id="PR00696">
    <property type="entry name" value="RSOLVASERUVC"/>
</dbReference>
<dbReference type="SUPFAM" id="SSF53098">
    <property type="entry name" value="Ribonuclease H-like"/>
    <property type="match status" value="1"/>
</dbReference>
<dbReference type="PROSITE" id="PS01321">
    <property type="entry name" value="RUVC"/>
    <property type="match status" value="1"/>
</dbReference>
<evidence type="ECO:0000255" key="1">
    <source>
        <dbReference type="HAMAP-Rule" id="MF_00034"/>
    </source>
</evidence>
<evidence type="ECO:0000256" key="2">
    <source>
        <dbReference type="SAM" id="MobiDB-lite"/>
    </source>
</evidence>
<sequence>MIVLGVDPGLTRCGVGVIEAGAYRRLSFIHVDVVRSDPHESQDLRLLKIYDGLCAKMDEFIPDTVSIERVFAQENRNTVLGTAQAAGMAMLAAAQRGIPVALHTPTESKMAITGNGKAEKIQMERMVARILNLNALPTPADAADALAIAICHALRPSGALEGGEREQHLTPAQRQWAQATQHATRRRGVRRGM</sequence>